<protein>
    <recommendedName>
        <fullName evidence="1">Isoleucine--tRNA ligase</fullName>
        <ecNumber evidence="1">6.1.1.5</ecNumber>
    </recommendedName>
    <alternativeName>
        <fullName evidence="1">Isoleucyl-tRNA synthetase</fullName>
        <shortName evidence="1">IleRS</shortName>
    </alternativeName>
</protein>
<accession>B2I6V2</accession>
<evidence type="ECO:0000255" key="1">
    <source>
        <dbReference type="HAMAP-Rule" id="MF_02002"/>
    </source>
</evidence>
<proteinExistence type="inferred from homology"/>
<keyword id="KW-0030">Aminoacyl-tRNA synthetase</keyword>
<keyword id="KW-0067">ATP-binding</keyword>
<keyword id="KW-0963">Cytoplasm</keyword>
<keyword id="KW-0436">Ligase</keyword>
<keyword id="KW-0479">Metal-binding</keyword>
<keyword id="KW-0547">Nucleotide-binding</keyword>
<keyword id="KW-0648">Protein biosynthesis</keyword>
<keyword id="KW-0862">Zinc</keyword>
<dbReference type="EC" id="6.1.1.5" evidence="1"/>
<dbReference type="EMBL" id="CP001011">
    <property type="protein sequence ID" value="ACB92929.1"/>
    <property type="molecule type" value="Genomic_DNA"/>
</dbReference>
<dbReference type="RefSeq" id="WP_011098114.1">
    <property type="nucleotide sequence ID" value="NC_010577.1"/>
</dbReference>
<dbReference type="SMR" id="B2I6V2"/>
<dbReference type="GeneID" id="93905258"/>
<dbReference type="KEGG" id="xfn:XfasM23_1521"/>
<dbReference type="HOGENOM" id="CLU_001493_7_1_6"/>
<dbReference type="Proteomes" id="UP000001698">
    <property type="component" value="Chromosome"/>
</dbReference>
<dbReference type="GO" id="GO:0005829">
    <property type="term" value="C:cytosol"/>
    <property type="evidence" value="ECO:0007669"/>
    <property type="project" value="TreeGrafter"/>
</dbReference>
<dbReference type="GO" id="GO:0002161">
    <property type="term" value="F:aminoacyl-tRNA deacylase activity"/>
    <property type="evidence" value="ECO:0007669"/>
    <property type="project" value="InterPro"/>
</dbReference>
<dbReference type="GO" id="GO:0005524">
    <property type="term" value="F:ATP binding"/>
    <property type="evidence" value="ECO:0007669"/>
    <property type="project" value="UniProtKB-UniRule"/>
</dbReference>
<dbReference type="GO" id="GO:0004822">
    <property type="term" value="F:isoleucine-tRNA ligase activity"/>
    <property type="evidence" value="ECO:0007669"/>
    <property type="project" value="UniProtKB-UniRule"/>
</dbReference>
<dbReference type="GO" id="GO:0000049">
    <property type="term" value="F:tRNA binding"/>
    <property type="evidence" value="ECO:0007669"/>
    <property type="project" value="InterPro"/>
</dbReference>
<dbReference type="GO" id="GO:0008270">
    <property type="term" value="F:zinc ion binding"/>
    <property type="evidence" value="ECO:0007669"/>
    <property type="project" value="UniProtKB-UniRule"/>
</dbReference>
<dbReference type="GO" id="GO:0006428">
    <property type="term" value="P:isoleucyl-tRNA aminoacylation"/>
    <property type="evidence" value="ECO:0007669"/>
    <property type="project" value="UniProtKB-UniRule"/>
</dbReference>
<dbReference type="CDD" id="cd07960">
    <property type="entry name" value="Anticodon_Ia_Ile_BEm"/>
    <property type="match status" value="1"/>
</dbReference>
<dbReference type="FunFam" id="1.10.730.20:FF:000001">
    <property type="entry name" value="Isoleucine--tRNA ligase"/>
    <property type="match status" value="1"/>
</dbReference>
<dbReference type="FunFam" id="3.40.50.620:FF:000042">
    <property type="entry name" value="Isoleucine--tRNA ligase"/>
    <property type="match status" value="1"/>
</dbReference>
<dbReference type="FunFam" id="3.40.50.620:FF:000048">
    <property type="entry name" value="Isoleucine--tRNA ligase"/>
    <property type="match status" value="1"/>
</dbReference>
<dbReference type="FunFam" id="3.90.740.10:FF:000022">
    <property type="entry name" value="Isoleucine--tRNA ligase"/>
    <property type="match status" value="1"/>
</dbReference>
<dbReference type="Gene3D" id="1.10.730.20">
    <property type="match status" value="1"/>
</dbReference>
<dbReference type="Gene3D" id="3.40.50.620">
    <property type="entry name" value="HUPs"/>
    <property type="match status" value="2"/>
</dbReference>
<dbReference type="Gene3D" id="3.90.740.10">
    <property type="entry name" value="Valyl/Leucyl/Isoleucyl-tRNA synthetase, editing domain"/>
    <property type="match status" value="1"/>
</dbReference>
<dbReference type="HAMAP" id="MF_02002">
    <property type="entry name" value="Ile_tRNA_synth_type1"/>
    <property type="match status" value="1"/>
</dbReference>
<dbReference type="InterPro" id="IPR001412">
    <property type="entry name" value="aa-tRNA-synth_I_CS"/>
</dbReference>
<dbReference type="InterPro" id="IPR002300">
    <property type="entry name" value="aa-tRNA-synth_Ia"/>
</dbReference>
<dbReference type="InterPro" id="IPR033708">
    <property type="entry name" value="Anticodon_Ile_BEm"/>
</dbReference>
<dbReference type="InterPro" id="IPR002301">
    <property type="entry name" value="Ile-tRNA-ligase"/>
</dbReference>
<dbReference type="InterPro" id="IPR023585">
    <property type="entry name" value="Ile-tRNA-ligase_type1"/>
</dbReference>
<dbReference type="InterPro" id="IPR050081">
    <property type="entry name" value="Ile-tRNA_ligase"/>
</dbReference>
<dbReference type="InterPro" id="IPR013155">
    <property type="entry name" value="M/V/L/I-tRNA-synth_anticd-bd"/>
</dbReference>
<dbReference type="InterPro" id="IPR014729">
    <property type="entry name" value="Rossmann-like_a/b/a_fold"/>
</dbReference>
<dbReference type="InterPro" id="IPR009080">
    <property type="entry name" value="tRNAsynth_Ia_anticodon-bd"/>
</dbReference>
<dbReference type="InterPro" id="IPR009008">
    <property type="entry name" value="Val/Leu/Ile-tRNA-synth_edit"/>
</dbReference>
<dbReference type="InterPro" id="IPR010663">
    <property type="entry name" value="Znf_FPG/IleRS"/>
</dbReference>
<dbReference type="NCBIfam" id="TIGR00392">
    <property type="entry name" value="ileS"/>
    <property type="match status" value="1"/>
</dbReference>
<dbReference type="PANTHER" id="PTHR42765:SF1">
    <property type="entry name" value="ISOLEUCINE--TRNA LIGASE, MITOCHONDRIAL"/>
    <property type="match status" value="1"/>
</dbReference>
<dbReference type="PANTHER" id="PTHR42765">
    <property type="entry name" value="SOLEUCYL-TRNA SYNTHETASE"/>
    <property type="match status" value="1"/>
</dbReference>
<dbReference type="Pfam" id="PF08264">
    <property type="entry name" value="Anticodon_1"/>
    <property type="match status" value="1"/>
</dbReference>
<dbReference type="Pfam" id="PF00133">
    <property type="entry name" value="tRNA-synt_1"/>
    <property type="match status" value="1"/>
</dbReference>
<dbReference type="Pfam" id="PF06827">
    <property type="entry name" value="zf-FPG_IleRS"/>
    <property type="match status" value="1"/>
</dbReference>
<dbReference type="PRINTS" id="PR00984">
    <property type="entry name" value="TRNASYNTHILE"/>
</dbReference>
<dbReference type="SUPFAM" id="SSF47323">
    <property type="entry name" value="Anticodon-binding domain of a subclass of class I aminoacyl-tRNA synthetases"/>
    <property type="match status" value="1"/>
</dbReference>
<dbReference type="SUPFAM" id="SSF52374">
    <property type="entry name" value="Nucleotidylyl transferase"/>
    <property type="match status" value="1"/>
</dbReference>
<dbReference type="SUPFAM" id="SSF50677">
    <property type="entry name" value="ValRS/IleRS/LeuRS editing domain"/>
    <property type="match status" value="1"/>
</dbReference>
<dbReference type="PROSITE" id="PS00178">
    <property type="entry name" value="AA_TRNA_LIGASE_I"/>
    <property type="match status" value="1"/>
</dbReference>
<feature type="chain" id="PRO_1000189217" description="Isoleucine--tRNA ligase">
    <location>
        <begin position="1"/>
        <end position="943"/>
    </location>
</feature>
<feature type="short sequence motif" description="'HIGH' region">
    <location>
        <begin position="59"/>
        <end position="69"/>
    </location>
</feature>
<feature type="short sequence motif" description="'KMSKS' region">
    <location>
        <begin position="618"/>
        <end position="622"/>
    </location>
</feature>
<feature type="binding site" evidence="1">
    <location>
        <position position="577"/>
    </location>
    <ligand>
        <name>L-isoleucyl-5'-AMP</name>
        <dbReference type="ChEBI" id="CHEBI:178002"/>
    </ligand>
</feature>
<feature type="binding site" evidence="1">
    <location>
        <position position="621"/>
    </location>
    <ligand>
        <name>ATP</name>
        <dbReference type="ChEBI" id="CHEBI:30616"/>
    </ligand>
</feature>
<feature type="binding site" evidence="1">
    <location>
        <position position="906"/>
    </location>
    <ligand>
        <name>Zn(2+)</name>
        <dbReference type="ChEBI" id="CHEBI:29105"/>
    </ligand>
</feature>
<feature type="binding site" evidence="1">
    <location>
        <position position="909"/>
    </location>
    <ligand>
        <name>Zn(2+)</name>
        <dbReference type="ChEBI" id="CHEBI:29105"/>
    </ligand>
</feature>
<feature type="binding site" evidence="1">
    <location>
        <position position="926"/>
    </location>
    <ligand>
        <name>Zn(2+)</name>
        <dbReference type="ChEBI" id="CHEBI:29105"/>
    </ligand>
</feature>
<feature type="binding site" evidence="1">
    <location>
        <position position="929"/>
    </location>
    <ligand>
        <name>Zn(2+)</name>
        <dbReference type="ChEBI" id="CHEBI:29105"/>
    </ligand>
</feature>
<comment type="function">
    <text evidence="1">Catalyzes the attachment of isoleucine to tRNA(Ile). As IleRS can inadvertently accommodate and process structurally similar amino acids such as valine, to avoid such errors it has two additional distinct tRNA(Ile)-dependent editing activities. One activity is designated as 'pretransfer' editing and involves the hydrolysis of activated Val-AMP. The other activity is designated 'posttransfer' editing and involves deacylation of mischarged Val-tRNA(Ile).</text>
</comment>
<comment type="catalytic activity">
    <reaction evidence="1">
        <text>tRNA(Ile) + L-isoleucine + ATP = L-isoleucyl-tRNA(Ile) + AMP + diphosphate</text>
        <dbReference type="Rhea" id="RHEA:11060"/>
        <dbReference type="Rhea" id="RHEA-COMP:9666"/>
        <dbReference type="Rhea" id="RHEA-COMP:9695"/>
        <dbReference type="ChEBI" id="CHEBI:30616"/>
        <dbReference type="ChEBI" id="CHEBI:33019"/>
        <dbReference type="ChEBI" id="CHEBI:58045"/>
        <dbReference type="ChEBI" id="CHEBI:78442"/>
        <dbReference type="ChEBI" id="CHEBI:78528"/>
        <dbReference type="ChEBI" id="CHEBI:456215"/>
        <dbReference type="EC" id="6.1.1.5"/>
    </reaction>
</comment>
<comment type="cofactor">
    <cofactor evidence="1">
        <name>Zn(2+)</name>
        <dbReference type="ChEBI" id="CHEBI:29105"/>
    </cofactor>
    <text evidence="1">Binds 1 zinc ion per subunit.</text>
</comment>
<comment type="subunit">
    <text evidence="1">Monomer.</text>
</comment>
<comment type="subcellular location">
    <subcellularLocation>
        <location evidence="1">Cytoplasm</location>
    </subcellularLocation>
</comment>
<comment type="domain">
    <text evidence="1">IleRS has two distinct active sites: one for aminoacylation and one for editing. The misactivated valine is translocated from the active site to the editing site, which sterically excludes the correctly activated isoleucine. The single editing site contains two valyl binding pockets, one specific for each substrate (Val-AMP or Val-tRNA(Ile)).</text>
</comment>
<comment type="similarity">
    <text evidence="1">Belongs to the class-I aminoacyl-tRNA synthetase family. IleS type 1 subfamily.</text>
</comment>
<organism>
    <name type="scientific">Xylella fastidiosa (strain M23)</name>
    <dbReference type="NCBI Taxonomy" id="405441"/>
    <lineage>
        <taxon>Bacteria</taxon>
        <taxon>Pseudomonadati</taxon>
        <taxon>Pseudomonadota</taxon>
        <taxon>Gammaproteobacteria</taxon>
        <taxon>Lysobacterales</taxon>
        <taxon>Lysobacteraceae</taxon>
        <taxon>Xylella</taxon>
    </lineage>
</organism>
<name>SYI_XYLF2</name>
<gene>
    <name evidence="1" type="primary">ileS</name>
    <name type="ordered locus">XfasM23_1521</name>
</gene>
<reference key="1">
    <citation type="journal article" date="2010" name="J. Bacteriol.">
        <title>Whole genome sequences of two Xylella fastidiosa strains (M12 and M23) causing almond leaf scorch disease in California.</title>
        <authorList>
            <person name="Chen J."/>
            <person name="Xie G."/>
            <person name="Han S."/>
            <person name="Chertkov O."/>
            <person name="Sims D."/>
            <person name="Civerolo E.L."/>
        </authorList>
    </citation>
    <scope>NUCLEOTIDE SEQUENCE [LARGE SCALE GENOMIC DNA]</scope>
    <source>
        <strain>M23</strain>
    </source>
</reference>
<sequence length="943" mass="105633">MSQDYKTTLHLPATDFPMRGDLPKREPAILERWERDDFYAQLRAHAKGRPLFLLHDGPPYANGQIHLGHAVNKILKDIIIKSKHLDGFDAPYIPGWDCHGLPIEIAIEKKYGKVGVTLDAVQFRQKCREYAAEQIQLQRRDFKRLGIIGDWDAPYKTLDFRFEADEIRALAKIVDKGHLIRGTKPVHWCFDCGSALAEAEIEYTDKISPMVDVAYPALDPSALAAVFNATLPPDVQLAVPIWTTTPWTLPASLAICVGPTLDYVLVEGPTHSGQRRWLILAEALAAKALARYGIAELLIHGSAKGAAMEQHIFAHPFYPDRTIPLLLGNHVSAEDGTGAVHTAPGHGQEDHQVFQQYGLLNRYSAAELNPVDARGVYLSTTPPLGELTLAGLHIWKANPLIVDALRLRGVLLAAAEMHHSYPHCWRHKTPIVFRATPQWFISMEQAALRSAALKAITHVTWYPQWGQARILSMIENRPDWTISRQRTWGVPIPLFVHRHSGAPHPHSAALMRQIADRVQQQGVDIWYSLDQTELLGTEADQYEKITDILDVWFDSGITHEAVLLERGLPKPADLYLEGADQHRGWFQSSLLTGVAMDNAAPYKQCLTHGFTVDQHGRKMSKSLGNGIEPQDIIKTLGADILRLWIASTDYSNEMSLSQEILKRTTDAYRRIRNTARFLLGNLHGFDPTLHLVPLSDMIALDRWIVHRAFELQQTIKAAYTRYDFAEIVQTILNFCSVDLGSLYLDVTKDRLYTMREDAPGRRSAQTAMYHLTAAFVRWIAPILSFTADELWSYLPGDHADNVLFTTWYDGLAPLPPNAPLTAADFDKLLTLRDHVTKVLEPMRANGVIGAALEAEITVAAAADTAARWQPLTEELRFLFITGDVTVTPANTDGFFVSAQATTKAKCARCWHYRADIGAHPTHPELCGRCITNVDGPGEQRHWF</sequence>